<comment type="function">
    <text evidence="1">Specifically methylates the N7 position of guanine in position 535 of 16S rRNA.</text>
</comment>
<comment type="subcellular location">
    <subcellularLocation>
        <location evidence="1">Cytoplasm</location>
    </subcellularLocation>
</comment>
<comment type="similarity">
    <text evidence="1">Belongs to the methyltransferase superfamily. RNA methyltransferase RsmG family.</text>
</comment>
<name>RSMG_BACCZ</name>
<sequence length="239" mass="27210">MNIEQFQSMLEEKGITLSSRQLEQFEIYFETLVEWNEKMNLTAITEKEEVYLKHFFDSITAAFYYDFSKPFSICDVGAGAGFPSIPLKICFPHLKVTIVDSLQKRINFLNHLAQKLELSDVAFCHDRAETFGKKEGVREAYDIVMARAVARLSVLSELCLPLVKVGGTFIAMKGAAAKEEIENGKYALEVLGGDLKEMSTFQLPFEESERNILLIEKKRKTPKKYPRKPGTPNKLPIEK</sequence>
<organism>
    <name type="scientific">Bacillus cereus (strain ZK / E33L)</name>
    <dbReference type="NCBI Taxonomy" id="288681"/>
    <lineage>
        <taxon>Bacteria</taxon>
        <taxon>Bacillati</taxon>
        <taxon>Bacillota</taxon>
        <taxon>Bacilli</taxon>
        <taxon>Bacillales</taxon>
        <taxon>Bacillaceae</taxon>
        <taxon>Bacillus</taxon>
        <taxon>Bacillus cereus group</taxon>
    </lineage>
</organism>
<evidence type="ECO:0000255" key="1">
    <source>
        <dbReference type="HAMAP-Rule" id="MF_00074"/>
    </source>
</evidence>
<keyword id="KW-0963">Cytoplasm</keyword>
<keyword id="KW-0489">Methyltransferase</keyword>
<keyword id="KW-0698">rRNA processing</keyword>
<keyword id="KW-0949">S-adenosyl-L-methionine</keyword>
<keyword id="KW-0808">Transferase</keyword>
<gene>
    <name evidence="1" type="primary">rsmG</name>
    <name type="ordered locus">BCE33L5179</name>
</gene>
<proteinExistence type="inferred from homology"/>
<feature type="chain" id="PRO_1000010121" description="Ribosomal RNA small subunit methyltransferase G">
    <location>
        <begin position="1"/>
        <end position="239"/>
    </location>
</feature>
<feature type="binding site" evidence="1">
    <location>
        <position position="77"/>
    </location>
    <ligand>
        <name>S-adenosyl-L-methionine</name>
        <dbReference type="ChEBI" id="CHEBI:59789"/>
    </ligand>
</feature>
<feature type="binding site" evidence="1">
    <location>
        <position position="82"/>
    </location>
    <ligand>
        <name>S-adenosyl-L-methionine</name>
        <dbReference type="ChEBI" id="CHEBI:59789"/>
    </ligand>
</feature>
<feature type="binding site" evidence="1">
    <location>
        <begin position="128"/>
        <end position="129"/>
    </location>
    <ligand>
        <name>S-adenosyl-L-methionine</name>
        <dbReference type="ChEBI" id="CHEBI:59789"/>
    </ligand>
</feature>
<feature type="binding site" evidence="1">
    <location>
        <position position="147"/>
    </location>
    <ligand>
        <name>S-adenosyl-L-methionine</name>
        <dbReference type="ChEBI" id="CHEBI:59789"/>
    </ligand>
</feature>
<protein>
    <recommendedName>
        <fullName evidence="1">Ribosomal RNA small subunit methyltransferase G</fullName>
        <ecNumber evidence="1">2.1.1.-</ecNumber>
    </recommendedName>
    <alternativeName>
        <fullName evidence="1">16S rRNA 7-methylguanosine methyltransferase</fullName>
        <shortName evidence="1">16S rRNA m7G methyltransferase</shortName>
    </alternativeName>
</protein>
<dbReference type="EC" id="2.1.1.-" evidence="1"/>
<dbReference type="EMBL" id="CP000001">
    <property type="protein sequence ID" value="AAU20309.1"/>
    <property type="molecule type" value="Genomic_DNA"/>
</dbReference>
<dbReference type="RefSeq" id="WP_001019620.1">
    <property type="nucleotide sequence ID" value="NC_006274.1"/>
</dbReference>
<dbReference type="SMR" id="Q630C0"/>
<dbReference type="KEGG" id="bcz:BCE33L5179"/>
<dbReference type="PATRIC" id="fig|288681.22.peg.162"/>
<dbReference type="Proteomes" id="UP000002612">
    <property type="component" value="Chromosome"/>
</dbReference>
<dbReference type="GO" id="GO:0005829">
    <property type="term" value="C:cytosol"/>
    <property type="evidence" value="ECO:0007669"/>
    <property type="project" value="TreeGrafter"/>
</dbReference>
<dbReference type="GO" id="GO:0070043">
    <property type="term" value="F:rRNA (guanine-N7-)-methyltransferase activity"/>
    <property type="evidence" value="ECO:0007669"/>
    <property type="project" value="UniProtKB-UniRule"/>
</dbReference>
<dbReference type="CDD" id="cd02440">
    <property type="entry name" value="AdoMet_MTases"/>
    <property type="match status" value="1"/>
</dbReference>
<dbReference type="FunFam" id="3.40.50.150:FF:000041">
    <property type="entry name" value="Ribosomal RNA small subunit methyltransferase G"/>
    <property type="match status" value="1"/>
</dbReference>
<dbReference type="Gene3D" id="3.40.50.150">
    <property type="entry name" value="Vaccinia Virus protein VP39"/>
    <property type="match status" value="1"/>
</dbReference>
<dbReference type="HAMAP" id="MF_00074">
    <property type="entry name" value="16SrRNA_methyltr_G"/>
    <property type="match status" value="1"/>
</dbReference>
<dbReference type="InterPro" id="IPR003682">
    <property type="entry name" value="rRNA_ssu_MeTfrase_G"/>
</dbReference>
<dbReference type="InterPro" id="IPR029063">
    <property type="entry name" value="SAM-dependent_MTases_sf"/>
</dbReference>
<dbReference type="NCBIfam" id="TIGR00138">
    <property type="entry name" value="rsmG_gidB"/>
    <property type="match status" value="1"/>
</dbReference>
<dbReference type="PANTHER" id="PTHR31760">
    <property type="entry name" value="S-ADENOSYL-L-METHIONINE-DEPENDENT METHYLTRANSFERASES SUPERFAMILY PROTEIN"/>
    <property type="match status" value="1"/>
</dbReference>
<dbReference type="PANTHER" id="PTHR31760:SF0">
    <property type="entry name" value="S-ADENOSYL-L-METHIONINE-DEPENDENT METHYLTRANSFERASES SUPERFAMILY PROTEIN"/>
    <property type="match status" value="1"/>
</dbReference>
<dbReference type="Pfam" id="PF02527">
    <property type="entry name" value="GidB"/>
    <property type="match status" value="1"/>
</dbReference>
<dbReference type="PIRSF" id="PIRSF003078">
    <property type="entry name" value="GidB"/>
    <property type="match status" value="1"/>
</dbReference>
<dbReference type="SUPFAM" id="SSF53335">
    <property type="entry name" value="S-adenosyl-L-methionine-dependent methyltransferases"/>
    <property type="match status" value="1"/>
</dbReference>
<reference key="1">
    <citation type="journal article" date="2006" name="J. Bacteriol.">
        <title>Pathogenomic sequence analysis of Bacillus cereus and Bacillus thuringiensis isolates closely related to Bacillus anthracis.</title>
        <authorList>
            <person name="Han C.S."/>
            <person name="Xie G."/>
            <person name="Challacombe J.F."/>
            <person name="Altherr M.R."/>
            <person name="Bhotika S.S."/>
            <person name="Bruce D."/>
            <person name="Campbell C.S."/>
            <person name="Campbell M.L."/>
            <person name="Chen J."/>
            <person name="Chertkov O."/>
            <person name="Cleland C."/>
            <person name="Dimitrijevic M."/>
            <person name="Doggett N.A."/>
            <person name="Fawcett J.J."/>
            <person name="Glavina T."/>
            <person name="Goodwin L.A."/>
            <person name="Hill K.K."/>
            <person name="Hitchcock P."/>
            <person name="Jackson P.J."/>
            <person name="Keim P."/>
            <person name="Kewalramani A.R."/>
            <person name="Longmire J."/>
            <person name="Lucas S."/>
            <person name="Malfatti S."/>
            <person name="McMurry K."/>
            <person name="Meincke L.J."/>
            <person name="Misra M."/>
            <person name="Moseman B.L."/>
            <person name="Mundt M."/>
            <person name="Munk A.C."/>
            <person name="Okinaka R.T."/>
            <person name="Parson-Quintana B."/>
            <person name="Reilly L.P."/>
            <person name="Richardson P."/>
            <person name="Robinson D.L."/>
            <person name="Rubin E."/>
            <person name="Saunders E."/>
            <person name="Tapia R."/>
            <person name="Tesmer J.G."/>
            <person name="Thayer N."/>
            <person name="Thompson L.S."/>
            <person name="Tice H."/>
            <person name="Ticknor L.O."/>
            <person name="Wills P.L."/>
            <person name="Brettin T.S."/>
            <person name="Gilna P."/>
        </authorList>
    </citation>
    <scope>NUCLEOTIDE SEQUENCE [LARGE SCALE GENOMIC DNA]</scope>
    <source>
        <strain>ZK / E33L</strain>
    </source>
</reference>
<accession>Q630C0</accession>